<feature type="chain" id="PRO_1000133327" description="Oxygen-dependent choline dehydrogenase">
    <location>
        <begin position="1"/>
        <end position="562"/>
    </location>
</feature>
<feature type="active site" description="Proton acceptor" evidence="1">
    <location>
        <position position="473"/>
    </location>
</feature>
<feature type="binding site" evidence="1">
    <location>
        <begin position="4"/>
        <end position="33"/>
    </location>
    <ligand>
        <name>FAD</name>
        <dbReference type="ChEBI" id="CHEBI:57692"/>
    </ligand>
</feature>
<accession>B5Z1R0</accession>
<proteinExistence type="inferred from homology"/>
<keyword id="KW-0274">FAD</keyword>
<keyword id="KW-0285">Flavoprotein</keyword>
<keyword id="KW-0520">NAD</keyword>
<keyword id="KW-0560">Oxidoreductase</keyword>
<sequence>MQFDYIIIGAGSAGNVLATRLTEDPNTSVLLLEAGGPDYRFDFRTQMPAALAFPLQGKRYNWAYETEPEPFMNNRRMECGRGKGLGGSSLINGMCYIRGNAMDLDNWAKEPGLENWSYLDCLPYYRKAETRDVGENDYHGGDGPVSVTTSKPGVNPLFEAMIEAGVQAGYPRTDDLNGYQQEGFGPMDRTVTPQGRRASTARGYLDQAKSRPNLTIRTHAMTDHIIFDCKRAVGVEWLEGDSTIPTRATANKEVLLCAGAIASPQILQRSGVGNAELLAEFDIPLVHDLPGVGENLQDHLEMYLQYECKEPVSLYPALQWWNQPKIGAEWLFGGTGVGASNHFEAGGFIRSREEFAWPNIQYHFLPVAINYNGSNAVKEHGFQCHVGSMRSPSRGHVRIKSRDPHQHPAILFNYMSHEQDWQEFRDAIRITREIMHQPALDQYRGREISPGTECQTDEQLDEFVRNHAETAFHPCGTCKMGYDEMSVVDGEGRVHGLEGLRVVDASIMPQIITGNLNATTIMIGEKMADMIRGKEALPRSTAGYFVANGMPVRAKKMSRDLN</sequence>
<protein>
    <recommendedName>
        <fullName evidence="1">Oxygen-dependent choline dehydrogenase</fullName>
        <shortName evidence="1">CDH</shortName>
        <shortName evidence="1">CHD</shortName>
        <ecNumber evidence="1">1.1.99.1</ecNumber>
    </recommendedName>
    <alternativeName>
        <fullName evidence="1">Betaine aldehyde dehydrogenase</fullName>
        <shortName evidence="1">BADH</shortName>
        <ecNumber evidence="1">1.2.1.8</ecNumber>
    </alternativeName>
</protein>
<comment type="function">
    <text evidence="1">Involved in the biosynthesis of the osmoprotectant glycine betaine. Catalyzes the oxidation of choline to betaine aldehyde and betaine aldehyde to glycine betaine at the same rate.</text>
</comment>
<comment type="catalytic activity">
    <reaction evidence="1">
        <text>choline + A = betaine aldehyde + AH2</text>
        <dbReference type="Rhea" id="RHEA:17433"/>
        <dbReference type="ChEBI" id="CHEBI:13193"/>
        <dbReference type="ChEBI" id="CHEBI:15354"/>
        <dbReference type="ChEBI" id="CHEBI:15710"/>
        <dbReference type="ChEBI" id="CHEBI:17499"/>
        <dbReference type="EC" id="1.1.99.1"/>
    </reaction>
</comment>
<comment type="catalytic activity">
    <reaction evidence="1">
        <text>betaine aldehyde + NAD(+) + H2O = glycine betaine + NADH + 2 H(+)</text>
        <dbReference type="Rhea" id="RHEA:15305"/>
        <dbReference type="ChEBI" id="CHEBI:15377"/>
        <dbReference type="ChEBI" id="CHEBI:15378"/>
        <dbReference type="ChEBI" id="CHEBI:15710"/>
        <dbReference type="ChEBI" id="CHEBI:17750"/>
        <dbReference type="ChEBI" id="CHEBI:57540"/>
        <dbReference type="ChEBI" id="CHEBI:57945"/>
        <dbReference type="EC" id="1.2.1.8"/>
    </reaction>
</comment>
<comment type="cofactor">
    <cofactor evidence="1">
        <name>FAD</name>
        <dbReference type="ChEBI" id="CHEBI:57692"/>
    </cofactor>
</comment>
<comment type="pathway">
    <text evidence="1">Amine and polyamine biosynthesis; betaine biosynthesis via choline pathway; betaine aldehyde from choline (cytochrome c reductase route): step 1/1.</text>
</comment>
<comment type="similarity">
    <text evidence="1">Belongs to the GMC oxidoreductase family.</text>
</comment>
<name>BETA_ECO5E</name>
<reference key="1">
    <citation type="journal article" date="2011" name="Proc. Natl. Acad. Sci. U.S.A.">
        <title>Genomic anatomy of Escherichia coli O157:H7 outbreaks.</title>
        <authorList>
            <person name="Eppinger M."/>
            <person name="Mammel M.K."/>
            <person name="Leclerc J.E."/>
            <person name="Ravel J."/>
            <person name="Cebula T.A."/>
        </authorList>
    </citation>
    <scope>NUCLEOTIDE SEQUENCE [LARGE SCALE GENOMIC DNA]</scope>
    <source>
        <strain>EC4115 / EHEC</strain>
    </source>
</reference>
<gene>
    <name evidence="1" type="primary">betA</name>
    <name type="ordered locus">ECH74115_0373</name>
</gene>
<dbReference type="EC" id="1.1.99.1" evidence="1"/>
<dbReference type="EC" id="1.2.1.8" evidence="1"/>
<dbReference type="EMBL" id="CP001164">
    <property type="protein sequence ID" value="ACI38177.1"/>
    <property type="molecule type" value="Genomic_DNA"/>
</dbReference>
<dbReference type="RefSeq" id="WP_001159114.1">
    <property type="nucleotide sequence ID" value="NC_011353.1"/>
</dbReference>
<dbReference type="SMR" id="B5Z1R0"/>
<dbReference type="KEGG" id="ecf:ECH74115_0373"/>
<dbReference type="HOGENOM" id="CLU_002865_7_1_6"/>
<dbReference type="UniPathway" id="UPA00529">
    <property type="reaction ID" value="UER00385"/>
</dbReference>
<dbReference type="GO" id="GO:0016020">
    <property type="term" value="C:membrane"/>
    <property type="evidence" value="ECO:0007669"/>
    <property type="project" value="TreeGrafter"/>
</dbReference>
<dbReference type="GO" id="GO:0008802">
    <property type="term" value="F:betaine-aldehyde dehydrogenase (NAD+) activity"/>
    <property type="evidence" value="ECO:0007669"/>
    <property type="project" value="UniProtKB-EC"/>
</dbReference>
<dbReference type="GO" id="GO:0008812">
    <property type="term" value="F:choline dehydrogenase activity"/>
    <property type="evidence" value="ECO:0007669"/>
    <property type="project" value="UniProtKB-UniRule"/>
</dbReference>
<dbReference type="GO" id="GO:0050660">
    <property type="term" value="F:flavin adenine dinucleotide binding"/>
    <property type="evidence" value="ECO:0007669"/>
    <property type="project" value="InterPro"/>
</dbReference>
<dbReference type="GO" id="GO:0019285">
    <property type="term" value="P:glycine betaine biosynthetic process from choline"/>
    <property type="evidence" value="ECO:0007669"/>
    <property type="project" value="UniProtKB-UniRule"/>
</dbReference>
<dbReference type="Gene3D" id="3.50.50.60">
    <property type="entry name" value="FAD/NAD(P)-binding domain"/>
    <property type="match status" value="1"/>
</dbReference>
<dbReference type="Gene3D" id="3.30.560.10">
    <property type="entry name" value="Glucose Oxidase, domain 3"/>
    <property type="match status" value="1"/>
</dbReference>
<dbReference type="HAMAP" id="MF_00750">
    <property type="entry name" value="Choline_dehydrogen"/>
    <property type="match status" value="1"/>
</dbReference>
<dbReference type="InterPro" id="IPR011533">
    <property type="entry name" value="BetA"/>
</dbReference>
<dbReference type="InterPro" id="IPR036188">
    <property type="entry name" value="FAD/NAD-bd_sf"/>
</dbReference>
<dbReference type="InterPro" id="IPR012132">
    <property type="entry name" value="GMC_OxRdtase"/>
</dbReference>
<dbReference type="InterPro" id="IPR000172">
    <property type="entry name" value="GMC_OxRdtase_N"/>
</dbReference>
<dbReference type="InterPro" id="IPR007867">
    <property type="entry name" value="GMC_OxRtase_C"/>
</dbReference>
<dbReference type="NCBIfam" id="TIGR01810">
    <property type="entry name" value="betA"/>
    <property type="match status" value="1"/>
</dbReference>
<dbReference type="NCBIfam" id="NF002550">
    <property type="entry name" value="PRK02106.1"/>
    <property type="match status" value="1"/>
</dbReference>
<dbReference type="PANTHER" id="PTHR11552:SF147">
    <property type="entry name" value="CHOLINE DEHYDROGENASE, MITOCHONDRIAL"/>
    <property type="match status" value="1"/>
</dbReference>
<dbReference type="PANTHER" id="PTHR11552">
    <property type="entry name" value="GLUCOSE-METHANOL-CHOLINE GMC OXIDOREDUCTASE"/>
    <property type="match status" value="1"/>
</dbReference>
<dbReference type="Pfam" id="PF05199">
    <property type="entry name" value="GMC_oxred_C"/>
    <property type="match status" value="1"/>
</dbReference>
<dbReference type="Pfam" id="PF00732">
    <property type="entry name" value="GMC_oxred_N"/>
    <property type="match status" value="1"/>
</dbReference>
<dbReference type="PIRSF" id="PIRSF000137">
    <property type="entry name" value="Alcohol_oxidase"/>
    <property type="match status" value="1"/>
</dbReference>
<dbReference type="SUPFAM" id="SSF54373">
    <property type="entry name" value="FAD-linked reductases, C-terminal domain"/>
    <property type="match status" value="1"/>
</dbReference>
<dbReference type="SUPFAM" id="SSF51905">
    <property type="entry name" value="FAD/NAD(P)-binding domain"/>
    <property type="match status" value="1"/>
</dbReference>
<dbReference type="PROSITE" id="PS00623">
    <property type="entry name" value="GMC_OXRED_1"/>
    <property type="match status" value="1"/>
</dbReference>
<dbReference type="PROSITE" id="PS00624">
    <property type="entry name" value="GMC_OXRED_2"/>
    <property type="match status" value="1"/>
</dbReference>
<organism>
    <name type="scientific">Escherichia coli O157:H7 (strain EC4115 / EHEC)</name>
    <dbReference type="NCBI Taxonomy" id="444450"/>
    <lineage>
        <taxon>Bacteria</taxon>
        <taxon>Pseudomonadati</taxon>
        <taxon>Pseudomonadota</taxon>
        <taxon>Gammaproteobacteria</taxon>
        <taxon>Enterobacterales</taxon>
        <taxon>Enterobacteriaceae</taxon>
        <taxon>Escherichia</taxon>
    </lineage>
</organism>
<evidence type="ECO:0000255" key="1">
    <source>
        <dbReference type="HAMAP-Rule" id="MF_00750"/>
    </source>
</evidence>